<dbReference type="EMBL" id="CP001078">
    <property type="protein sequence ID" value="ACD52160.1"/>
    <property type="molecule type" value="Genomic_DNA"/>
</dbReference>
<dbReference type="RefSeq" id="WP_012450370.1">
    <property type="nucleotide sequence ID" value="NC_010723.1"/>
</dbReference>
<dbReference type="SMR" id="B2V5C5"/>
<dbReference type="KEGG" id="cbt:CLH_2273"/>
<dbReference type="HOGENOM" id="CLU_117144_3_1_9"/>
<dbReference type="Gene3D" id="3.30.110.70">
    <property type="entry name" value="Hypothetical protein apc22750. Chain B"/>
    <property type="match status" value="1"/>
</dbReference>
<dbReference type="HAMAP" id="MF_00338">
    <property type="entry name" value="UPF0145"/>
    <property type="match status" value="1"/>
</dbReference>
<dbReference type="InterPro" id="IPR035439">
    <property type="entry name" value="UPF0145_dom_sf"/>
</dbReference>
<dbReference type="InterPro" id="IPR002765">
    <property type="entry name" value="UPF0145_YbjQ-like"/>
</dbReference>
<dbReference type="NCBIfam" id="NF002224">
    <property type="entry name" value="PRK01119.1"/>
    <property type="match status" value="1"/>
</dbReference>
<dbReference type="PANTHER" id="PTHR34068">
    <property type="entry name" value="UPF0145 PROTEIN YBJQ"/>
    <property type="match status" value="1"/>
</dbReference>
<dbReference type="PANTHER" id="PTHR34068:SF1">
    <property type="entry name" value="UPF0145 PROTEIN YBJQ"/>
    <property type="match status" value="1"/>
</dbReference>
<dbReference type="Pfam" id="PF01906">
    <property type="entry name" value="YbjQ_1"/>
    <property type="match status" value="1"/>
</dbReference>
<dbReference type="SUPFAM" id="SSF117782">
    <property type="entry name" value="YbjQ-like"/>
    <property type="match status" value="1"/>
</dbReference>
<evidence type="ECO:0000255" key="1">
    <source>
        <dbReference type="HAMAP-Rule" id="MF_00338"/>
    </source>
</evidence>
<reference key="1">
    <citation type="submission" date="2008-05" db="EMBL/GenBank/DDBJ databases">
        <title>Complete genome sequence of Clostridium botulinum E3 str. Alaska E43.</title>
        <authorList>
            <person name="Brinkac L.M."/>
            <person name="Brown J.L."/>
            <person name="Bruce D."/>
            <person name="Detter C."/>
            <person name="Munk C."/>
            <person name="Smith L.A."/>
            <person name="Smith T.J."/>
            <person name="Sutton G."/>
            <person name="Brettin T.S."/>
        </authorList>
    </citation>
    <scope>NUCLEOTIDE SEQUENCE [LARGE SCALE GENOMIC DNA]</scope>
    <source>
        <strain>Alaska E43 / Type E3</strain>
    </source>
</reference>
<organism>
    <name type="scientific">Clostridium botulinum (strain Alaska E43 / Type E3)</name>
    <dbReference type="NCBI Taxonomy" id="508767"/>
    <lineage>
        <taxon>Bacteria</taxon>
        <taxon>Bacillati</taxon>
        <taxon>Bacillota</taxon>
        <taxon>Clostridia</taxon>
        <taxon>Eubacteriales</taxon>
        <taxon>Clostridiaceae</taxon>
        <taxon>Clostridium</taxon>
    </lineage>
</organism>
<name>Y2273_CLOBA</name>
<proteinExistence type="inferred from homology"/>
<gene>
    <name type="ordered locus">CLH_2273</name>
</gene>
<sequence>MIITTTPAIEGKNILEYKGVVFGEVISGVNFIKDFAAGLSNFFGGRSNTYEDELIGAREKAMKEMENRAIQMGANAVVGVDIDYEVLGSDNGMLMVTASGTAVYCE</sequence>
<protein>
    <recommendedName>
        <fullName evidence="1">UPF0145 protein CLH_2273</fullName>
    </recommendedName>
</protein>
<comment type="similarity">
    <text evidence="1">Belongs to the UPF0145 family.</text>
</comment>
<feature type="chain" id="PRO_1000119986" description="UPF0145 protein CLH_2273">
    <location>
        <begin position="1"/>
        <end position="106"/>
    </location>
</feature>
<accession>B2V5C5</accession>